<evidence type="ECO:0000250" key="1"/>
<evidence type="ECO:0000250" key="2">
    <source>
        <dbReference type="UniProtKB" id="Q12792"/>
    </source>
</evidence>
<evidence type="ECO:0000250" key="3">
    <source>
        <dbReference type="UniProtKB" id="Q5RJR2"/>
    </source>
</evidence>
<evidence type="ECO:0000250" key="4">
    <source>
        <dbReference type="UniProtKB" id="Q91YR1"/>
    </source>
</evidence>
<evidence type="ECO:0000255" key="5">
    <source>
        <dbReference type="PROSITE-ProRule" id="PRU00599"/>
    </source>
</evidence>
<evidence type="ECO:0000256" key="6">
    <source>
        <dbReference type="SAM" id="MobiDB-lite"/>
    </source>
</evidence>
<evidence type="ECO:0000305" key="7"/>
<reference key="1">
    <citation type="submission" date="2005-01" db="EMBL/GenBank/DDBJ databases">
        <title>Analysis of sequences obtained from constructed full-length bovine cDNA libraries.</title>
        <authorList>
            <person name="Yu J."/>
            <person name="Meng Y."/>
            <person name="Wang Z."/>
            <person name="Hansen C."/>
            <person name="Li C."/>
            <person name="Moore S.S."/>
        </authorList>
    </citation>
    <scope>NUCLEOTIDE SEQUENCE [LARGE SCALE MRNA]</scope>
    <source>
        <tissue>Lymphoid epithelium</tissue>
    </source>
</reference>
<feature type="initiator methionine" description="Removed" evidence="2">
    <location>
        <position position="1"/>
    </location>
</feature>
<feature type="chain" id="PRO_0000232404" description="Twinfilin-1">
    <location>
        <begin position="2"/>
        <end position="350"/>
    </location>
</feature>
<feature type="domain" description="ADF-H 1" evidence="5">
    <location>
        <begin position="2"/>
        <end position="139"/>
    </location>
</feature>
<feature type="domain" description="ADF-H 2" evidence="5">
    <location>
        <begin position="177"/>
        <end position="313"/>
    </location>
</feature>
<feature type="region of interest" description="Disordered" evidence="6">
    <location>
        <begin position="316"/>
        <end position="350"/>
    </location>
</feature>
<feature type="modified residue" description="N-acetylserine" evidence="2">
    <location>
        <position position="2"/>
    </location>
</feature>
<feature type="modified residue" description="Phosphoserine" evidence="2">
    <location>
        <position position="143"/>
    </location>
</feature>
<feature type="modified residue" description="Phosphoserine" evidence="3">
    <location>
        <position position="277"/>
    </location>
</feature>
<feature type="modified residue" description="Phosphotyrosine" evidence="2">
    <location>
        <position position="309"/>
    </location>
</feature>
<feature type="modified residue" description="Phosphothreonine" evidence="2">
    <location>
        <position position="349"/>
    </location>
</feature>
<comment type="function">
    <text evidence="1">Actin-binding protein involved in motile and morphological processes. Inhibits actin polymerization, likely by sequestering G-actin. By capping the barbed ends of filaments, it also regulates motility. Seems to play an important role in clathrin-mediated endocytosis and distribution of endocytic organelles (By similarity).</text>
</comment>
<comment type="subunit">
    <text evidence="2 4">Interacts with G-actin; ADP-actin form and capping protein (CP). May also be able to interact with TWF2 and phosphoinositides, PI(4,5)P2. When bound to PI(4,5)P2, it is down-regulated. Interacts with ACTG1.</text>
</comment>
<comment type="subcellular location">
    <subcellularLocation>
        <location>Cytoplasm</location>
    </subcellularLocation>
    <subcellularLocation>
        <location evidence="1">Cytoplasm</location>
        <location evidence="1">Cytoskeleton</location>
    </subcellularLocation>
    <text evidence="1">Diffuse cytoplasmic localization with perinuclear and G-actin-rich cortical actin structures sublocalization. Also found at membrane ruffles and cell-cell contacts (By similarity).</text>
</comment>
<comment type="PTM">
    <text evidence="1">Phosphorylated on serine and threonine residues.</text>
</comment>
<comment type="similarity">
    <text evidence="7">Belongs to the actin-binding proteins ADF family. Twinfilin subfamily.</text>
</comment>
<comment type="online information" name="Protein Spotlight">
    <link uri="https://www.proteinspotlight.org/back_issues/073"/>
    <text>Molecular embrace - Issue 73 of August 2006</text>
</comment>
<sequence>MSHQTGIQASEDVKDIFARARNGKYRLLKISIENEKLVIGSCRKPSDSWDQDYDSFVLPLLEDKQPCYVLFRLDSQNAQGYEWIFIAWSPDHSHVRQKMLYAATRATLKKEFGGGHIKDEMFGTVKEDVSLHGYKKYLLSQSSPAPLTAAEEELRQIKINEVQTDVSVDAKHQTLQGVAFPISQEAFQALEKLNNRQLNYVQLEIDIKNEIIILANTINTELKDLPKRIPKDAARYHFFLYKHSHEGDYLESIVFIYSMPGYTCSIRERMLYSSCKSPLLEIVERQLQMDIIRKIEIDNGDELTADFLYEEVHPKQHAHKQSFAKPKGPSGKRGIRRIIRGPAETEATTE</sequence>
<organism>
    <name type="scientific">Bos taurus</name>
    <name type="common">Bovine</name>
    <dbReference type="NCBI Taxonomy" id="9913"/>
    <lineage>
        <taxon>Eukaryota</taxon>
        <taxon>Metazoa</taxon>
        <taxon>Chordata</taxon>
        <taxon>Craniata</taxon>
        <taxon>Vertebrata</taxon>
        <taxon>Euteleostomi</taxon>
        <taxon>Mammalia</taxon>
        <taxon>Eutheria</taxon>
        <taxon>Laurasiatheria</taxon>
        <taxon>Artiodactyla</taxon>
        <taxon>Ruminantia</taxon>
        <taxon>Pecora</taxon>
        <taxon>Bovidae</taxon>
        <taxon>Bovinae</taxon>
        <taxon>Bos</taxon>
    </lineage>
</organism>
<protein>
    <recommendedName>
        <fullName>Twinfilin-1</fullName>
    </recommendedName>
</protein>
<accession>Q56JV6</accession>
<proteinExistence type="evidence at transcript level"/>
<name>TWF1_BOVIN</name>
<gene>
    <name type="primary">TWF1</name>
</gene>
<keyword id="KW-0007">Acetylation</keyword>
<keyword id="KW-0009">Actin-binding</keyword>
<keyword id="KW-0963">Cytoplasm</keyword>
<keyword id="KW-0206">Cytoskeleton</keyword>
<keyword id="KW-0597">Phosphoprotein</keyword>
<keyword id="KW-1185">Reference proteome</keyword>
<keyword id="KW-0677">Repeat</keyword>
<dbReference type="EMBL" id="AY911376">
    <property type="protein sequence ID" value="AAW82139.1"/>
    <property type="molecule type" value="mRNA"/>
</dbReference>
<dbReference type="RefSeq" id="NP_001020491.1">
    <property type="nucleotide sequence ID" value="NM_001025320.2"/>
</dbReference>
<dbReference type="SMR" id="Q56JV6"/>
<dbReference type="FunCoup" id="Q56JV6">
    <property type="interactions" value="2296"/>
</dbReference>
<dbReference type="STRING" id="9913.ENSBTAP00000070174"/>
<dbReference type="PaxDb" id="9913-ENSBTAP00000027889"/>
<dbReference type="GeneID" id="506683"/>
<dbReference type="KEGG" id="bta:506683"/>
<dbReference type="CTD" id="5756"/>
<dbReference type="eggNOG" id="KOG1747">
    <property type="taxonomic scope" value="Eukaryota"/>
</dbReference>
<dbReference type="HOGENOM" id="CLU_031995_1_0_1"/>
<dbReference type="InParanoid" id="Q56JV6"/>
<dbReference type="OrthoDB" id="10006997at2759"/>
<dbReference type="TreeFam" id="TF352598"/>
<dbReference type="Proteomes" id="UP000009136">
    <property type="component" value="Unplaced"/>
</dbReference>
<dbReference type="GO" id="GO:0005884">
    <property type="term" value="C:actin filament"/>
    <property type="evidence" value="ECO:0000318"/>
    <property type="project" value="GO_Central"/>
</dbReference>
<dbReference type="GO" id="GO:0005737">
    <property type="term" value="C:cytoplasm"/>
    <property type="evidence" value="ECO:0000318"/>
    <property type="project" value="GO_Central"/>
</dbReference>
<dbReference type="GO" id="GO:0030016">
    <property type="term" value="C:myofibril"/>
    <property type="evidence" value="ECO:0000318"/>
    <property type="project" value="GO_Central"/>
</dbReference>
<dbReference type="GO" id="GO:0003779">
    <property type="term" value="F:actin binding"/>
    <property type="evidence" value="ECO:0000250"/>
    <property type="project" value="UniProtKB"/>
</dbReference>
<dbReference type="GO" id="GO:0051015">
    <property type="term" value="F:actin filament binding"/>
    <property type="evidence" value="ECO:0000318"/>
    <property type="project" value="GO_Central"/>
</dbReference>
<dbReference type="GO" id="GO:0003785">
    <property type="term" value="F:actin monomer binding"/>
    <property type="evidence" value="ECO:0000318"/>
    <property type="project" value="GO_Central"/>
</dbReference>
<dbReference type="GO" id="GO:0030042">
    <property type="term" value="P:actin filament depolymerization"/>
    <property type="evidence" value="ECO:0000318"/>
    <property type="project" value="GO_Central"/>
</dbReference>
<dbReference type="GO" id="GO:0051016">
    <property type="term" value="P:barbed-end actin filament capping"/>
    <property type="evidence" value="ECO:0000318"/>
    <property type="project" value="GO_Central"/>
</dbReference>
<dbReference type="GO" id="GO:0010976">
    <property type="term" value="P:positive regulation of neuron projection development"/>
    <property type="evidence" value="ECO:0000318"/>
    <property type="project" value="GO_Central"/>
</dbReference>
<dbReference type="GO" id="GO:0010591">
    <property type="term" value="P:regulation of lamellipodium assembly"/>
    <property type="evidence" value="ECO:0000318"/>
    <property type="project" value="GO_Central"/>
</dbReference>
<dbReference type="CDD" id="cd11284">
    <property type="entry name" value="ADF_Twf-C_like"/>
    <property type="match status" value="1"/>
</dbReference>
<dbReference type="CDD" id="cd11285">
    <property type="entry name" value="ADF_Twf-N_like"/>
    <property type="match status" value="1"/>
</dbReference>
<dbReference type="FunFam" id="3.40.20.10:FF:000007">
    <property type="entry name" value="Twinfilin-1 isoform 1"/>
    <property type="match status" value="1"/>
</dbReference>
<dbReference type="FunFam" id="3.40.20.10:FF:000012">
    <property type="entry name" value="Twinfilin-1 isoform 1"/>
    <property type="match status" value="1"/>
</dbReference>
<dbReference type="Gene3D" id="3.40.20.10">
    <property type="entry name" value="Severin"/>
    <property type="match status" value="2"/>
</dbReference>
<dbReference type="InterPro" id="IPR002108">
    <property type="entry name" value="ADF-H"/>
</dbReference>
<dbReference type="InterPro" id="IPR029006">
    <property type="entry name" value="ADF-H/Gelsolin-like_dom_sf"/>
</dbReference>
<dbReference type="InterPro" id="IPR028458">
    <property type="entry name" value="Twinfilin"/>
</dbReference>
<dbReference type="PANTHER" id="PTHR13759">
    <property type="entry name" value="TWINFILIN"/>
    <property type="match status" value="1"/>
</dbReference>
<dbReference type="PANTHER" id="PTHR13759:SF8">
    <property type="entry name" value="TWINFILIN-1"/>
    <property type="match status" value="1"/>
</dbReference>
<dbReference type="Pfam" id="PF00241">
    <property type="entry name" value="Cofilin_ADF"/>
    <property type="match status" value="2"/>
</dbReference>
<dbReference type="SMART" id="SM00102">
    <property type="entry name" value="ADF"/>
    <property type="match status" value="2"/>
</dbReference>
<dbReference type="SUPFAM" id="SSF55753">
    <property type="entry name" value="Actin depolymerizing proteins"/>
    <property type="match status" value="2"/>
</dbReference>
<dbReference type="PROSITE" id="PS51263">
    <property type="entry name" value="ADF_H"/>
    <property type="match status" value="2"/>
</dbReference>